<evidence type="ECO:0000255" key="1">
    <source>
        <dbReference type="HAMAP-Rule" id="MF_01320"/>
    </source>
</evidence>
<evidence type="ECO:0000256" key="2">
    <source>
        <dbReference type="SAM" id="MobiDB-lite"/>
    </source>
</evidence>
<evidence type="ECO:0000305" key="3"/>
<reference key="1">
    <citation type="journal article" date="2010" name="Appl. Environ. Microbiol.">
        <title>Conserved symbiotic plasmid DNA sequences in the multireplicon pangenomic structure of Rhizobium etli.</title>
        <authorList>
            <person name="Gonzalez V."/>
            <person name="Acosta J.L."/>
            <person name="Santamaria R.I."/>
            <person name="Bustos P."/>
            <person name="Fernandez J.L."/>
            <person name="Hernandez Gonzalez I.L."/>
            <person name="Diaz R."/>
            <person name="Flores M."/>
            <person name="Palacios R."/>
            <person name="Mora J."/>
            <person name="Davila G."/>
        </authorList>
    </citation>
    <scope>NUCLEOTIDE SEQUENCE [LARGE SCALE GENOMIC DNA]</scope>
    <source>
        <strain>CIAT 652</strain>
    </source>
</reference>
<proteinExistence type="inferred from homology"/>
<feature type="chain" id="PRO_1000141602" description="Large ribosomal subunit protein uL2">
    <location>
        <begin position="1"/>
        <end position="278"/>
    </location>
</feature>
<feature type="region of interest" description="Disordered" evidence="2">
    <location>
        <begin position="218"/>
        <end position="278"/>
    </location>
</feature>
<dbReference type="EMBL" id="CP001074">
    <property type="protein sequence ID" value="ACE90722.1"/>
    <property type="molecule type" value="Genomic_DNA"/>
</dbReference>
<dbReference type="SMR" id="B3PWS4"/>
<dbReference type="KEGG" id="rec:RHECIAT_CH0001752"/>
<dbReference type="eggNOG" id="COG0090">
    <property type="taxonomic scope" value="Bacteria"/>
</dbReference>
<dbReference type="HOGENOM" id="CLU_036235_2_1_5"/>
<dbReference type="Proteomes" id="UP000008817">
    <property type="component" value="Chromosome"/>
</dbReference>
<dbReference type="GO" id="GO:0015934">
    <property type="term" value="C:large ribosomal subunit"/>
    <property type="evidence" value="ECO:0007669"/>
    <property type="project" value="InterPro"/>
</dbReference>
<dbReference type="GO" id="GO:0019843">
    <property type="term" value="F:rRNA binding"/>
    <property type="evidence" value="ECO:0007669"/>
    <property type="project" value="UniProtKB-UniRule"/>
</dbReference>
<dbReference type="GO" id="GO:0003735">
    <property type="term" value="F:structural constituent of ribosome"/>
    <property type="evidence" value="ECO:0007669"/>
    <property type="project" value="InterPro"/>
</dbReference>
<dbReference type="GO" id="GO:0016740">
    <property type="term" value="F:transferase activity"/>
    <property type="evidence" value="ECO:0007669"/>
    <property type="project" value="InterPro"/>
</dbReference>
<dbReference type="GO" id="GO:0002181">
    <property type="term" value="P:cytoplasmic translation"/>
    <property type="evidence" value="ECO:0007669"/>
    <property type="project" value="TreeGrafter"/>
</dbReference>
<dbReference type="FunFam" id="2.30.30.30:FF:000001">
    <property type="entry name" value="50S ribosomal protein L2"/>
    <property type="match status" value="1"/>
</dbReference>
<dbReference type="FunFam" id="2.40.50.140:FF:000003">
    <property type="entry name" value="50S ribosomal protein L2"/>
    <property type="match status" value="1"/>
</dbReference>
<dbReference type="FunFam" id="4.10.950.10:FF:000001">
    <property type="entry name" value="50S ribosomal protein L2"/>
    <property type="match status" value="1"/>
</dbReference>
<dbReference type="Gene3D" id="2.30.30.30">
    <property type="match status" value="1"/>
</dbReference>
<dbReference type="Gene3D" id="2.40.50.140">
    <property type="entry name" value="Nucleic acid-binding proteins"/>
    <property type="match status" value="1"/>
</dbReference>
<dbReference type="Gene3D" id="4.10.950.10">
    <property type="entry name" value="Ribosomal protein L2, domain 3"/>
    <property type="match status" value="1"/>
</dbReference>
<dbReference type="HAMAP" id="MF_01320_B">
    <property type="entry name" value="Ribosomal_uL2_B"/>
    <property type="match status" value="1"/>
</dbReference>
<dbReference type="InterPro" id="IPR012340">
    <property type="entry name" value="NA-bd_OB-fold"/>
</dbReference>
<dbReference type="InterPro" id="IPR014722">
    <property type="entry name" value="Rib_uL2_dom2"/>
</dbReference>
<dbReference type="InterPro" id="IPR002171">
    <property type="entry name" value="Ribosomal_uL2"/>
</dbReference>
<dbReference type="InterPro" id="IPR005880">
    <property type="entry name" value="Ribosomal_uL2_bac/org-type"/>
</dbReference>
<dbReference type="InterPro" id="IPR022669">
    <property type="entry name" value="Ribosomal_uL2_C"/>
</dbReference>
<dbReference type="InterPro" id="IPR022671">
    <property type="entry name" value="Ribosomal_uL2_CS"/>
</dbReference>
<dbReference type="InterPro" id="IPR014726">
    <property type="entry name" value="Ribosomal_uL2_dom3"/>
</dbReference>
<dbReference type="InterPro" id="IPR022666">
    <property type="entry name" value="Ribosomal_uL2_RNA-bd_dom"/>
</dbReference>
<dbReference type="InterPro" id="IPR008991">
    <property type="entry name" value="Translation_prot_SH3-like_sf"/>
</dbReference>
<dbReference type="NCBIfam" id="TIGR01171">
    <property type="entry name" value="rplB_bact"/>
    <property type="match status" value="1"/>
</dbReference>
<dbReference type="PANTHER" id="PTHR13691:SF5">
    <property type="entry name" value="LARGE RIBOSOMAL SUBUNIT PROTEIN UL2M"/>
    <property type="match status" value="1"/>
</dbReference>
<dbReference type="PANTHER" id="PTHR13691">
    <property type="entry name" value="RIBOSOMAL PROTEIN L2"/>
    <property type="match status" value="1"/>
</dbReference>
<dbReference type="Pfam" id="PF00181">
    <property type="entry name" value="Ribosomal_L2"/>
    <property type="match status" value="1"/>
</dbReference>
<dbReference type="Pfam" id="PF03947">
    <property type="entry name" value="Ribosomal_L2_C"/>
    <property type="match status" value="1"/>
</dbReference>
<dbReference type="PIRSF" id="PIRSF002158">
    <property type="entry name" value="Ribosomal_L2"/>
    <property type="match status" value="1"/>
</dbReference>
<dbReference type="SMART" id="SM01383">
    <property type="entry name" value="Ribosomal_L2"/>
    <property type="match status" value="1"/>
</dbReference>
<dbReference type="SMART" id="SM01382">
    <property type="entry name" value="Ribosomal_L2_C"/>
    <property type="match status" value="1"/>
</dbReference>
<dbReference type="SUPFAM" id="SSF50249">
    <property type="entry name" value="Nucleic acid-binding proteins"/>
    <property type="match status" value="1"/>
</dbReference>
<dbReference type="SUPFAM" id="SSF50104">
    <property type="entry name" value="Translation proteins SH3-like domain"/>
    <property type="match status" value="1"/>
</dbReference>
<dbReference type="PROSITE" id="PS00467">
    <property type="entry name" value="RIBOSOMAL_L2"/>
    <property type="match status" value="1"/>
</dbReference>
<organism>
    <name type="scientific">Rhizobium etli (strain CIAT 652)</name>
    <dbReference type="NCBI Taxonomy" id="491916"/>
    <lineage>
        <taxon>Bacteria</taxon>
        <taxon>Pseudomonadati</taxon>
        <taxon>Pseudomonadota</taxon>
        <taxon>Alphaproteobacteria</taxon>
        <taxon>Hyphomicrobiales</taxon>
        <taxon>Rhizobiaceae</taxon>
        <taxon>Rhizobium/Agrobacterium group</taxon>
        <taxon>Rhizobium</taxon>
    </lineage>
</organism>
<sequence length="278" mass="30335">MALKTFNPTTPSQRQLVIVDRSSLYKGKPVKALTEGLTKSGGRNNLGRITARFIGGGHKRSYRLVDFKRRKFDVEGTVERIEYDPNRTAFIALVSYADGEQAYIIAPQRLAAGDKVIASEKAVDVKPGNTMPLQYIPVGSIIHNVEMKPGKGGQIARSAGSYAQLVGRDQGMAILRLNSGEQRLVSGICLASIGAVSNPDHANINDGKAGRTVWRGKRPHNRGVVMNPVDHPHGGGEGRTSGGRHPVTPWGKPTKGKRTRSNKSTDKMIMRSRHQRKK</sequence>
<accession>B3PWS4</accession>
<comment type="function">
    <text evidence="1">One of the primary rRNA binding proteins. Required for association of the 30S and 50S subunits to form the 70S ribosome, for tRNA binding and peptide bond formation. It has been suggested to have peptidyltransferase activity; this is somewhat controversial. Makes several contacts with the 16S rRNA in the 70S ribosome.</text>
</comment>
<comment type="subunit">
    <text evidence="1">Part of the 50S ribosomal subunit. Forms a bridge to the 30S subunit in the 70S ribosome.</text>
</comment>
<comment type="similarity">
    <text evidence="1">Belongs to the universal ribosomal protein uL2 family.</text>
</comment>
<gene>
    <name evidence="1" type="primary">rplB</name>
    <name type="ordered locus">RHECIAT_CH0001752</name>
</gene>
<protein>
    <recommendedName>
        <fullName evidence="1">Large ribosomal subunit protein uL2</fullName>
    </recommendedName>
    <alternativeName>
        <fullName evidence="3">50S ribosomal protein L2</fullName>
    </alternativeName>
</protein>
<keyword id="KW-0687">Ribonucleoprotein</keyword>
<keyword id="KW-0689">Ribosomal protein</keyword>
<keyword id="KW-0694">RNA-binding</keyword>
<keyword id="KW-0699">rRNA-binding</keyword>
<name>RL2_RHIE6</name>